<organism>
    <name type="scientific">Pseudomonas fluorescens (strain SBW25)</name>
    <dbReference type="NCBI Taxonomy" id="216595"/>
    <lineage>
        <taxon>Bacteria</taxon>
        <taxon>Pseudomonadati</taxon>
        <taxon>Pseudomonadota</taxon>
        <taxon>Gammaproteobacteria</taxon>
        <taxon>Pseudomonadales</taxon>
        <taxon>Pseudomonadaceae</taxon>
        <taxon>Pseudomonas</taxon>
    </lineage>
</organism>
<accession>C3K2C1</accession>
<gene>
    <name type="ordered locus">PFLU_5318</name>
</gene>
<comment type="subcellular location">
    <subcellularLocation>
        <location evidence="1">Cell membrane</location>
        <topology evidence="1">Multi-pass membrane protein</topology>
    </subcellularLocation>
</comment>
<comment type="similarity">
    <text evidence="1">Belongs to the UPF0114 family.</text>
</comment>
<dbReference type="EMBL" id="AM181176">
    <property type="protein sequence ID" value="CAY52445.1"/>
    <property type="molecule type" value="Genomic_DNA"/>
</dbReference>
<dbReference type="RefSeq" id="WP_010206662.1">
    <property type="nucleotide sequence ID" value="NC_012660.1"/>
</dbReference>
<dbReference type="STRING" id="294.SRM1_04917"/>
<dbReference type="eggNOG" id="COG2862">
    <property type="taxonomic scope" value="Bacteria"/>
</dbReference>
<dbReference type="HOGENOM" id="CLU_097887_1_1_6"/>
<dbReference type="OrthoDB" id="9783569at2"/>
<dbReference type="GO" id="GO:0005886">
    <property type="term" value="C:plasma membrane"/>
    <property type="evidence" value="ECO:0007669"/>
    <property type="project" value="UniProtKB-SubCell"/>
</dbReference>
<dbReference type="HAMAP" id="MF_00143">
    <property type="entry name" value="UPF0114"/>
    <property type="match status" value="1"/>
</dbReference>
<dbReference type="InterPro" id="IPR005134">
    <property type="entry name" value="UPF0114"/>
</dbReference>
<dbReference type="InterPro" id="IPR020761">
    <property type="entry name" value="UPF0114_bac"/>
</dbReference>
<dbReference type="NCBIfam" id="TIGR00645">
    <property type="entry name" value="HI0507"/>
    <property type="match status" value="1"/>
</dbReference>
<dbReference type="PANTHER" id="PTHR38596">
    <property type="entry name" value="UPF0114 PROTEIN YQHA"/>
    <property type="match status" value="1"/>
</dbReference>
<dbReference type="PANTHER" id="PTHR38596:SF1">
    <property type="entry name" value="UPF0114 PROTEIN YQHA"/>
    <property type="match status" value="1"/>
</dbReference>
<dbReference type="Pfam" id="PF03350">
    <property type="entry name" value="UPF0114"/>
    <property type="match status" value="1"/>
</dbReference>
<keyword id="KW-1003">Cell membrane</keyword>
<keyword id="KW-0472">Membrane</keyword>
<keyword id="KW-0812">Transmembrane</keyword>
<keyword id="KW-1133">Transmembrane helix</keyword>
<feature type="chain" id="PRO_1000203296" description="UPF0114 protein PFLU_5318">
    <location>
        <begin position="1"/>
        <end position="162"/>
    </location>
</feature>
<feature type="transmembrane region" description="Helical" evidence="1">
    <location>
        <begin position="15"/>
        <end position="35"/>
    </location>
</feature>
<feature type="transmembrane region" description="Helical" evidence="1">
    <location>
        <begin position="53"/>
        <end position="73"/>
    </location>
</feature>
<feature type="transmembrane region" description="Helical" evidence="1">
    <location>
        <begin position="136"/>
        <end position="156"/>
    </location>
</feature>
<name>Y5318_PSEFS</name>
<protein>
    <recommendedName>
        <fullName evidence="1">UPF0114 protein PFLU_5318</fullName>
    </recommendedName>
</protein>
<evidence type="ECO:0000255" key="1">
    <source>
        <dbReference type="HAMAP-Rule" id="MF_00143"/>
    </source>
</evidence>
<proteinExistence type="inferred from homology"/>
<reference key="1">
    <citation type="journal article" date="2009" name="Genome Biol.">
        <title>Genomic and genetic analyses of diversity and plant interactions of Pseudomonas fluorescens.</title>
        <authorList>
            <person name="Silby M.W."/>
            <person name="Cerdeno-Tarraga A.M."/>
            <person name="Vernikos G.S."/>
            <person name="Giddens S.R."/>
            <person name="Jackson R.W."/>
            <person name="Preston G.M."/>
            <person name="Zhang X.-X."/>
            <person name="Moon C.D."/>
            <person name="Gehrig S.M."/>
            <person name="Godfrey S.A.C."/>
            <person name="Knight C.G."/>
            <person name="Malone J.G."/>
            <person name="Robinson Z."/>
            <person name="Spiers A.J."/>
            <person name="Harris S."/>
            <person name="Challis G.L."/>
            <person name="Yaxley A.M."/>
            <person name="Harris D."/>
            <person name="Seeger K."/>
            <person name="Murphy L."/>
            <person name="Rutter S."/>
            <person name="Squares R."/>
            <person name="Quail M.A."/>
            <person name="Saunders E."/>
            <person name="Mavromatis K."/>
            <person name="Brettin T.S."/>
            <person name="Bentley S.D."/>
            <person name="Hothersall J."/>
            <person name="Stephens E."/>
            <person name="Thomas C.M."/>
            <person name="Parkhill J."/>
            <person name="Levy S.B."/>
            <person name="Rainey P.B."/>
            <person name="Thomson N.R."/>
        </authorList>
    </citation>
    <scope>NUCLEOTIDE SEQUENCE [LARGE SCALE GENOMIC DNA]</scope>
    <source>
        <strain>SBW25</strain>
    </source>
</reference>
<sequence length="162" mass="18276">MERFIENAMYASRWLLAPIYFGLSLGLLALALKFFQEVIHLLPSVFSMAESELILVLLSLIDMALVGGLLVMVMISGYENFVSQLDIDDNKEKLNWLGTMDSSSLKMKVAASIVAISSIHLLRIFMDAKNVDPQHLMWYVIIHMTFVVSAFAMGYLDKVTKH</sequence>